<reference key="1">
    <citation type="journal article" date="2009" name="Environ. Microbiol.">
        <title>The genome of Polaromonas naphthalenivorans strain CJ2, isolated from coal tar-contaminated sediment, reveals physiological and metabolic versatility and evolution through extensive horizontal gene transfer.</title>
        <authorList>
            <person name="Yagi J.M."/>
            <person name="Sims D."/>
            <person name="Brettin T."/>
            <person name="Bruce D."/>
            <person name="Madsen E.L."/>
        </authorList>
    </citation>
    <scope>NUCLEOTIDE SEQUENCE [LARGE SCALE GENOMIC DNA]</scope>
    <source>
        <strain>CJ2</strain>
    </source>
</reference>
<comment type="function">
    <text evidence="1">NDH-1 shuttles electrons from NADH, via FMN and iron-sulfur (Fe-S) centers, to quinones in the respiratory chain. The immediate electron acceptor for the enzyme in this species is believed to be ubiquinone. Couples the redox reaction to proton translocation (for every two electrons transferred, four hydrogen ions are translocated across the cytoplasmic membrane), and thus conserves the redox energy in a proton gradient.</text>
</comment>
<comment type="catalytic activity">
    <reaction evidence="1">
        <text>a quinone + NADH + 5 H(+)(in) = a quinol + NAD(+) + 4 H(+)(out)</text>
        <dbReference type="Rhea" id="RHEA:57888"/>
        <dbReference type="ChEBI" id="CHEBI:15378"/>
        <dbReference type="ChEBI" id="CHEBI:24646"/>
        <dbReference type="ChEBI" id="CHEBI:57540"/>
        <dbReference type="ChEBI" id="CHEBI:57945"/>
        <dbReference type="ChEBI" id="CHEBI:132124"/>
    </reaction>
</comment>
<comment type="subunit">
    <text evidence="1">NDH-1 is composed of 14 different subunits. Subunits NuoA, H, J, K, L, M, N constitute the membrane sector of the complex.</text>
</comment>
<comment type="subcellular location">
    <subcellularLocation>
        <location evidence="1">Cell inner membrane</location>
        <topology evidence="1">Multi-pass membrane protein</topology>
    </subcellularLocation>
</comment>
<comment type="similarity">
    <text evidence="1">Belongs to the complex I subunit 2 family.</text>
</comment>
<name>NUON_POLNA</name>
<gene>
    <name evidence="1" type="primary">nuoN</name>
    <name type="ordered locus">Pnap_1437</name>
</gene>
<keyword id="KW-0997">Cell inner membrane</keyword>
<keyword id="KW-1003">Cell membrane</keyword>
<keyword id="KW-0472">Membrane</keyword>
<keyword id="KW-0520">NAD</keyword>
<keyword id="KW-0874">Quinone</keyword>
<keyword id="KW-1185">Reference proteome</keyword>
<keyword id="KW-1278">Translocase</keyword>
<keyword id="KW-0812">Transmembrane</keyword>
<keyword id="KW-1133">Transmembrane helix</keyword>
<keyword id="KW-0813">Transport</keyword>
<keyword id="KW-0830">Ubiquinone</keyword>
<proteinExistence type="inferred from homology"/>
<evidence type="ECO:0000255" key="1">
    <source>
        <dbReference type="HAMAP-Rule" id="MF_00445"/>
    </source>
</evidence>
<feature type="chain" id="PRO_0000391203" description="NADH-quinone oxidoreductase subunit N">
    <location>
        <begin position="1"/>
        <end position="500"/>
    </location>
</feature>
<feature type="transmembrane region" description="Helical" evidence="1">
    <location>
        <begin position="6"/>
        <end position="26"/>
    </location>
</feature>
<feature type="transmembrane region" description="Helical" evidence="1">
    <location>
        <begin position="40"/>
        <end position="60"/>
    </location>
</feature>
<feature type="transmembrane region" description="Helical" evidence="1">
    <location>
        <begin position="69"/>
        <end position="89"/>
    </location>
</feature>
<feature type="transmembrane region" description="Helical" evidence="1">
    <location>
        <begin position="106"/>
        <end position="125"/>
    </location>
</feature>
<feature type="transmembrane region" description="Helical" evidence="1">
    <location>
        <begin position="129"/>
        <end position="151"/>
    </location>
</feature>
<feature type="transmembrane region" description="Helical" evidence="1">
    <location>
        <begin position="164"/>
        <end position="184"/>
    </location>
</feature>
<feature type="transmembrane region" description="Helical" evidence="1">
    <location>
        <begin position="207"/>
        <end position="227"/>
    </location>
</feature>
<feature type="transmembrane region" description="Helical" evidence="1">
    <location>
        <begin position="239"/>
        <end position="259"/>
    </location>
</feature>
<feature type="transmembrane region" description="Helical" evidence="1">
    <location>
        <begin position="276"/>
        <end position="296"/>
    </location>
</feature>
<feature type="transmembrane region" description="Helical" evidence="1">
    <location>
        <begin position="302"/>
        <end position="322"/>
    </location>
</feature>
<feature type="transmembrane region" description="Helical" evidence="1">
    <location>
        <begin position="337"/>
        <end position="357"/>
    </location>
</feature>
<feature type="transmembrane region" description="Helical" evidence="1">
    <location>
        <begin position="380"/>
        <end position="400"/>
    </location>
</feature>
<feature type="transmembrane region" description="Helical" evidence="1">
    <location>
        <begin position="417"/>
        <end position="437"/>
    </location>
</feature>
<feature type="transmembrane region" description="Helical" evidence="1">
    <location>
        <begin position="464"/>
        <end position="484"/>
    </location>
</feature>
<protein>
    <recommendedName>
        <fullName evidence="1">NADH-quinone oxidoreductase subunit N</fullName>
        <ecNumber evidence="1">7.1.1.-</ecNumber>
    </recommendedName>
    <alternativeName>
        <fullName evidence="1">NADH dehydrogenase I subunit N</fullName>
    </alternativeName>
    <alternativeName>
        <fullName evidence="1">NDH-1 subunit N</fullName>
    </alternativeName>
</protein>
<organism>
    <name type="scientific">Polaromonas naphthalenivorans (strain CJ2)</name>
    <dbReference type="NCBI Taxonomy" id="365044"/>
    <lineage>
        <taxon>Bacteria</taxon>
        <taxon>Pseudomonadati</taxon>
        <taxon>Pseudomonadota</taxon>
        <taxon>Betaproteobacteria</taxon>
        <taxon>Burkholderiales</taxon>
        <taxon>Comamonadaceae</taxon>
        <taxon>Polaromonas</taxon>
    </lineage>
</organism>
<dbReference type="EC" id="7.1.1.-" evidence="1"/>
<dbReference type="EMBL" id="CP000529">
    <property type="protein sequence ID" value="ABM36751.1"/>
    <property type="molecule type" value="Genomic_DNA"/>
</dbReference>
<dbReference type="RefSeq" id="WP_011800838.1">
    <property type="nucleotide sequence ID" value="NC_008781.1"/>
</dbReference>
<dbReference type="SMR" id="A1VM73"/>
<dbReference type="STRING" id="365044.Pnap_1437"/>
<dbReference type="KEGG" id="pna:Pnap_1437"/>
<dbReference type="eggNOG" id="COG1007">
    <property type="taxonomic scope" value="Bacteria"/>
</dbReference>
<dbReference type="HOGENOM" id="CLU_007100_1_3_4"/>
<dbReference type="OrthoDB" id="9768329at2"/>
<dbReference type="Proteomes" id="UP000000644">
    <property type="component" value="Chromosome"/>
</dbReference>
<dbReference type="GO" id="GO:0005886">
    <property type="term" value="C:plasma membrane"/>
    <property type="evidence" value="ECO:0007669"/>
    <property type="project" value="UniProtKB-SubCell"/>
</dbReference>
<dbReference type="GO" id="GO:0008137">
    <property type="term" value="F:NADH dehydrogenase (ubiquinone) activity"/>
    <property type="evidence" value="ECO:0007669"/>
    <property type="project" value="InterPro"/>
</dbReference>
<dbReference type="GO" id="GO:0050136">
    <property type="term" value="F:NADH:ubiquinone reductase (non-electrogenic) activity"/>
    <property type="evidence" value="ECO:0007669"/>
    <property type="project" value="UniProtKB-UniRule"/>
</dbReference>
<dbReference type="GO" id="GO:0048038">
    <property type="term" value="F:quinone binding"/>
    <property type="evidence" value="ECO:0007669"/>
    <property type="project" value="UniProtKB-KW"/>
</dbReference>
<dbReference type="GO" id="GO:0042773">
    <property type="term" value="P:ATP synthesis coupled electron transport"/>
    <property type="evidence" value="ECO:0007669"/>
    <property type="project" value="InterPro"/>
</dbReference>
<dbReference type="HAMAP" id="MF_00445">
    <property type="entry name" value="NDH1_NuoN_1"/>
    <property type="match status" value="1"/>
</dbReference>
<dbReference type="InterPro" id="IPR010096">
    <property type="entry name" value="NADH-Q_OxRdtase_suN/2"/>
</dbReference>
<dbReference type="InterPro" id="IPR001750">
    <property type="entry name" value="ND/Mrp_TM"/>
</dbReference>
<dbReference type="NCBIfam" id="TIGR01770">
    <property type="entry name" value="NDH_I_N"/>
    <property type="match status" value="1"/>
</dbReference>
<dbReference type="NCBIfam" id="NF004442">
    <property type="entry name" value="PRK05777.1-5"/>
    <property type="match status" value="1"/>
</dbReference>
<dbReference type="PANTHER" id="PTHR22773">
    <property type="entry name" value="NADH DEHYDROGENASE"/>
    <property type="match status" value="1"/>
</dbReference>
<dbReference type="Pfam" id="PF00361">
    <property type="entry name" value="Proton_antipo_M"/>
    <property type="match status" value="1"/>
</dbReference>
<dbReference type="PRINTS" id="PR01434">
    <property type="entry name" value="NADHDHGNASE5"/>
</dbReference>
<sequence>MIDKLSWIAVYPELVLLVMACLIALVDLGVKSPRRTLTYALTLLTLGAVAVMEASYALGGQTFYGFGNMVVVDPMGSWLKCFSSIALMITVVYGRPYAADRDMLRGGEFFTLSLFALLGMFVMISGHNFLVLYMGLELMTLCSYALVALRRDDAQATEAAMKYFVLGALASGFLLYGLSMLYGATGSLNINEVFNAIASRQVKHQVLVFGLVFIVAGLAFKLGAVPFHMWLPDVYQGAPTAVTLIIGGAPQLAAFAMTIRLLVEGLLPLAIDWQQMLALMAIGSLVIGNLAAVAQTNLKRMLAFSTISQMGFLLLGLLAGVVNGNQLHTESAYGAAMFYALTYVLTTLAAFGIILLLARAGHESEEITDLSGLNQRSPLYAGVMAMSMFSLAGLPPLVGFYAKLGVLQALISSGQTSYLVLAVFAVFMSLIGAFYYLRVIKVMYFDAPHSHNAQPISAPADAQIVLAINGALLLVLGIAPSSLMTLCAQSINSIVNSLGV</sequence>
<accession>A1VM73</accession>